<keyword id="KW-0143">Chaperone</keyword>
<keyword id="KW-0963">Cytoplasm</keyword>
<keyword id="KW-1185">Reference proteome</keyword>
<keyword id="KW-0346">Stress response</keyword>
<comment type="function">
    <text evidence="1">Participates actively in the response to hyperosmotic and heat shock by preventing the aggregation of stress-denatured proteins, in association with DnaK and GrpE. It is the nucleotide exchange factor for DnaK and may function as a thermosensor. Unfolded proteins bind initially to DnaJ; upon interaction with the DnaJ-bound protein, DnaK hydrolyzes its bound ATP, resulting in the formation of a stable complex. GrpE releases ADP from DnaK; ATP binding to DnaK triggers the release of the substrate protein, thus completing the reaction cycle. Several rounds of ATP-dependent interactions between DnaJ, DnaK and GrpE are required for fully efficient folding.</text>
</comment>
<comment type="subunit">
    <text evidence="1">Homodimer.</text>
</comment>
<comment type="subcellular location">
    <subcellularLocation>
        <location evidence="1">Cytoplasm</location>
    </subcellularLocation>
</comment>
<comment type="similarity">
    <text evidence="1">Belongs to the GrpE family.</text>
</comment>
<accession>B5ZMX0</accession>
<organism>
    <name type="scientific">Rhizobium leguminosarum bv. trifolii (strain WSM2304)</name>
    <dbReference type="NCBI Taxonomy" id="395492"/>
    <lineage>
        <taxon>Bacteria</taxon>
        <taxon>Pseudomonadati</taxon>
        <taxon>Pseudomonadota</taxon>
        <taxon>Alphaproteobacteria</taxon>
        <taxon>Hyphomicrobiales</taxon>
        <taxon>Rhizobiaceae</taxon>
        <taxon>Rhizobium/Agrobacterium group</taxon>
        <taxon>Rhizobium</taxon>
    </lineage>
</organism>
<feature type="chain" id="PRO_1000137603" description="Protein GrpE">
    <location>
        <begin position="1"/>
        <end position="210"/>
    </location>
</feature>
<dbReference type="EMBL" id="CP001191">
    <property type="protein sequence ID" value="ACI53311.1"/>
    <property type="molecule type" value="Genomic_DNA"/>
</dbReference>
<dbReference type="RefSeq" id="WP_012556368.1">
    <property type="nucleotide sequence ID" value="NC_011369.1"/>
</dbReference>
<dbReference type="SMR" id="B5ZMX0"/>
<dbReference type="STRING" id="395492.Rleg2_0008"/>
<dbReference type="KEGG" id="rlt:Rleg2_0008"/>
<dbReference type="eggNOG" id="COG0576">
    <property type="taxonomic scope" value="Bacteria"/>
</dbReference>
<dbReference type="HOGENOM" id="CLU_057217_0_2_5"/>
<dbReference type="Proteomes" id="UP000008330">
    <property type="component" value="Chromosome"/>
</dbReference>
<dbReference type="GO" id="GO:0005737">
    <property type="term" value="C:cytoplasm"/>
    <property type="evidence" value="ECO:0007669"/>
    <property type="project" value="UniProtKB-SubCell"/>
</dbReference>
<dbReference type="GO" id="GO:0000774">
    <property type="term" value="F:adenyl-nucleotide exchange factor activity"/>
    <property type="evidence" value="ECO:0007669"/>
    <property type="project" value="InterPro"/>
</dbReference>
<dbReference type="GO" id="GO:0042803">
    <property type="term" value="F:protein homodimerization activity"/>
    <property type="evidence" value="ECO:0007669"/>
    <property type="project" value="InterPro"/>
</dbReference>
<dbReference type="GO" id="GO:0051087">
    <property type="term" value="F:protein-folding chaperone binding"/>
    <property type="evidence" value="ECO:0007669"/>
    <property type="project" value="InterPro"/>
</dbReference>
<dbReference type="GO" id="GO:0051082">
    <property type="term" value="F:unfolded protein binding"/>
    <property type="evidence" value="ECO:0007669"/>
    <property type="project" value="TreeGrafter"/>
</dbReference>
<dbReference type="GO" id="GO:0006457">
    <property type="term" value="P:protein folding"/>
    <property type="evidence" value="ECO:0007669"/>
    <property type="project" value="InterPro"/>
</dbReference>
<dbReference type="CDD" id="cd00446">
    <property type="entry name" value="GrpE"/>
    <property type="match status" value="1"/>
</dbReference>
<dbReference type="FunFam" id="2.30.22.10:FF:000001">
    <property type="entry name" value="Protein GrpE"/>
    <property type="match status" value="1"/>
</dbReference>
<dbReference type="Gene3D" id="3.90.20.20">
    <property type="match status" value="1"/>
</dbReference>
<dbReference type="Gene3D" id="2.30.22.10">
    <property type="entry name" value="Head domain of nucleotide exchange factor GrpE"/>
    <property type="match status" value="1"/>
</dbReference>
<dbReference type="HAMAP" id="MF_01151">
    <property type="entry name" value="GrpE"/>
    <property type="match status" value="1"/>
</dbReference>
<dbReference type="InterPro" id="IPR000740">
    <property type="entry name" value="GrpE"/>
</dbReference>
<dbReference type="InterPro" id="IPR013805">
    <property type="entry name" value="GrpE_coiled_coil"/>
</dbReference>
<dbReference type="InterPro" id="IPR009012">
    <property type="entry name" value="GrpE_head"/>
</dbReference>
<dbReference type="NCBIfam" id="NF010738">
    <property type="entry name" value="PRK14140.1"/>
    <property type="match status" value="1"/>
</dbReference>
<dbReference type="NCBIfam" id="NF010739">
    <property type="entry name" value="PRK14141.1"/>
    <property type="match status" value="1"/>
</dbReference>
<dbReference type="NCBIfam" id="NF010748">
    <property type="entry name" value="PRK14150.1"/>
    <property type="match status" value="1"/>
</dbReference>
<dbReference type="PANTHER" id="PTHR21237">
    <property type="entry name" value="GRPE PROTEIN"/>
    <property type="match status" value="1"/>
</dbReference>
<dbReference type="PANTHER" id="PTHR21237:SF23">
    <property type="entry name" value="GRPE PROTEIN HOMOLOG, MITOCHONDRIAL"/>
    <property type="match status" value="1"/>
</dbReference>
<dbReference type="Pfam" id="PF01025">
    <property type="entry name" value="GrpE"/>
    <property type="match status" value="1"/>
</dbReference>
<dbReference type="PRINTS" id="PR00773">
    <property type="entry name" value="GRPEPROTEIN"/>
</dbReference>
<dbReference type="SUPFAM" id="SSF58014">
    <property type="entry name" value="Coiled-coil domain of nucleotide exchange factor GrpE"/>
    <property type="match status" value="1"/>
</dbReference>
<dbReference type="SUPFAM" id="SSF51064">
    <property type="entry name" value="Head domain of nucleotide exchange factor GrpE"/>
    <property type="match status" value="1"/>
</dbReference>
<dbReference type="PROSITE" id="PS01071">
    <property type="entry name" value="GRPE"/>
    <property type="match status" value="1"/>
</dbReference>
<protein>
    <recommendedName>
        <fullName evidence="1">Protein GrpE</fullName>
    </recommendedName>
    <alternativeName>
        <fullName evidence="1">HSP-70 cofactor</fullName>
    </alternativeName>
</protein>
<evidence type="ECO:0000255" key="1">
    <source>
        <dbReference type="HAMAP-Rule" id="MF_01151"/>
    </source>
</evidence>
<proteinExistence type="inferred from homology"/>
<name>GRPE_RHILW</name>
<reference key="1">
    <citation type="journal article" date="2010" name="Stand. Genomic Sci.">
        <title>Complete genome sequence of Rhizobium leguminosarum bv trifolii strain WSM2304, an effective microsymbiont of the South American clover Trifolium polymorphum.</title>
        <authorList>
            <person name="Reeve W."/>
            <person name="O'Hara G."/>
            <person name="Chain P."/>
            <person name="Ardley J."/>
            <person name="Brau L."/>
            <person name="Nandesena K."/>
            <person name="Tiwari R."/>
            <person name="Malfatti S."/>
            <person name="Kiss H."/>
            <person name="Lapidus A."/>
            <person name="Copeland A."/>
            <person name="Nolan M."/>
            <person name="Land M."/>
            <person name="Ivanova N."/>
            <person name="Mavromatis K."/>
            <person name="Markowitz V."/>
            <person name="Kyrpides N."/>
            <person name="Melino V."/>
            <person name="Denton M."/>
            <person name="Yates R."/>
            <person name="Howieson J."/>
        </authorList>
    </citation>
    <scope>NUCLEOTIDE SEQUENCE [LARGE SCALE GENOMIC DNA]</scope>
    <source>
        <strain>WSM2304</strain>
    </source>
</reference>
<gene>
    <name evidence="1" type="primary">grpE</name>
    <name type="ordered locus">Rleg2_0008</name>
</gene>
<sequence length="210" mass="22694">MTDDTTKNGPDATAADAAADAAAYVENDIAQEEAPQPDALELLKAENGELRDRYLRLAAEMDNLRRRTEREVKDAKSYSVAGFARDMLAVSDNLRRALDAIPAEVKDAADAGLSTLIEGVEMTERAMLSALERHGVRKLEPVGQKFDPNFHQAMFEVPNPDVPNNTVVQVVQAGFSIGERVLRPAMVGVAKGGPKAAEAETNSVFDEKDA</sequence>